<comment type="function">
    <text evidence="1">Probable disease resistance protein.</text>
</comment>
<comment type="alternative products">
    <event type="alternative splicing"/>
    <isoform>
        <id>Q9LQ54-1</id>
        <name>1</name>
        <sequence type="displayed"/>
    </isoform>
    <isoform>
        <id>Q9LQ54-2</id>
        <name>2</name>
        <sequence type="described" ref="VSP_042239 VSP_042240 VSP_042241"/>
    </isoform>
</comment>
<comment type="domain">
    <text evidence="1">The LRR repeats probably act as specificity determinant of pathogen recognition.</text>
</comment>
<comment type="similarity">
    <text evidence="4">Belongs to the disease resistance NB-LRR family.</text>
</comment>
<comment type="sequence caution" evidence="4">
    <conflict type="erroneous gene model prediction">
        <sequence resource="EMBL-CDS" id="AAF79754"/>
    </conflict>
</comment>
<comment type="online information" name="NIB-LRRS">
    <link uri="http://niblrrs.ucdavis.edu"/>
    <text>Functional and comparative genomics of disease resistance gene homologs</text>
</comment>
<dbReference type="EMBL" id="AB028231">
    <property type="protein sequence ID" value="BAA87956.1"/>
    <property type="molecule type" value="mRNA"/>
</dbReference>
<dbReference type="EMBL" id="AC009317">
    <property type="protein sequence ID" value="AAF79754.1"/>
    <property type="status" value="ALT_SEQ"/>
    <property type="molecule type" value="Genomic_DNA"/>
</dbReference>
<dbReference type="EMBL" id="CP002684">
    <property type="status" value="NOT_ANNOTATED_CDS"/>
    <property type="molecule type" value="Genomic_DNA"/>
</dbReference>
<dbReference type="PIR" id="T52429">
    <property type="entry name" value="T52429"/>
</dbReference>
<dbReference type="SMR" id="Q9LQ54"/>
<dbReference type="BioGRID" id="27477">
    <property type="interactions" value="1"/>
</dbReference>
<dbReference type="STRING" id="3702.Q9LQ54"/>
<dbReference type="PaxDb" id="3702-AT1G59620.1"/>
<dbReference type="ProteomicsDB" id="224309">
    <molecule id="Q9LQ54-1"/>
</dbReference>
<dbReference type="Araport" id="AT1G59620"/>
<dbReference type="TAIR" id="AT1G59620">
    <property type="gene designation" value="CW9"/>
</dbReference>
<dbReference type="eggNOG" id="KOG4658">
    <property type="taxonomic scope" value="Eukaryota"/>
</dbReference>
<dbReference type="InParanoid" id="Q9LQ54"/>
<dbReference type="PRO" id="PR:Q9LQ54"/>
<dbReference type="Proteomes" id="UP000006548">
    <property type="component" value="Chromosome 1"/>
</dbReference>
<dbReference type="ExpressionAtlas" id="Q9LQ54">
    <property type="expression patterns" value="baseline and differential"/>
</dbReference>
<dbReference type="GO" id="GO:0043531">
    <property type="term" value="F:ADP binding"/>
    <property type="evidence" value="ECO:0007669"/>
    <property type="project" value="InterPro"/>
</dbReference>
<dbReference type="GO" id="GO:0005524">
    <property type="term" value="F:ATP binding"/>
    <property type="evidence" value="ECO:0007669"/>
    <property type="project" value="UniProtKB-KW"/>
</dbReference>
<dbReference type="GO" id="GO:0098542">
    <property type="term" value="P:defense response to other organism"/>
    <property type="evidence" value="ECO:0000318"/>
    <property type="project" value="GO_Central"/>
</dbReference>
<dbReference type="CDD" id="cd14798">
    <property type="entry name" value="RX-CC_like"/>
    <property type="match status" value="1"/>
</dbReference>
<dbReference type="FunFam" id="3.40.50.300:FF:001091">
    <property type="entry name" value="Probable disease resistance protein At1g61300"/>
    <property type="match status" value="1"/>
</dbReference>
<dbReference type="FunFam" id="1.10.10.10:FF:000322">
    <property type="entry name" value="Probable disease resistance protein At1g63360"/>
    <property type="match status" value="1"/>
</dbReference>
<dbReference type="FunFam" id="1.10.8.430:FF:000003">
    <property type="entry name" value="Probable disease resistance protein At5g66910"/>
    <property type="match status" value="1"/>
</dbReference>
<dbReference type="Gene3D" id="1.20.5.4130">
    <property type="match status" value="1"/>
</dbReference>
<dbReference type="Gene3D" id="1.10.8.430">
    <property type="entry name" value="Helical domain of apoptotic protease-activating factors"/>
    <property type="match status" value="1"/>
</dbReference>
<dbReference type="Gene3D" id="3.40.50.300">
    <property type="entry name" value="P-loop containing nucleotide triphosphate hydrolases"/>
    <property type="match status" value="1"/>
</dbReference>
<dbReference type="Gene3D" id="3.80.10.10">
    <property type="entry name" value="Ribonuclease Inhibitor"/>
    <property type="match status" value="1"/>
</dbReference>
<dbReference type="Gene3D" id="1.10.10.10">
    <property type="entry name" value="Winged helix-like DNA-binding domain superfamily/Winged helix DNA-binding domain"/>
    <property type="match status" value="1"/>
</dbReference>
<dbReference type="InterPro" id="IPR042197">
    <property type="entry name" value="Apaf_helical"/>
</dbReference>
<dbReference type="InterPro" id="IPR032675">
    <property type="entry name" value="LRR_dom_sf"/>
</dbReference>
<dbReference type="InterPro" id="IPR055414">
    <property type="entry name" value="LRR_R13L4/SHOC2-like"/>
</dbReference>
<dbReference type="InterPro" id="IPR002182">
    <property type="entry name" value="NB-ARC"/>
</dbReference>
<dbReference type="InterPro" id="IPR027417">
    <property type="entry name" value="P-loop_NTPase"/>
</dbReference>
<dbReference type="InterPro" id="IPR038005">
    <property type="entry name" value="RX-like_CC"/>
</dbReference>
<dbReference type="InterPro" id="IPR041118">
    <property type="entry name" value="Rx_N"/>
</dbReference>
<dbReference type="InterPro" id="IPR036388">
    <property type="entry name" value="WH-like_DNA-bd_sf"/>
</dbReference>
<dbReference type="PANTHER" id="PTHR36766:SF40">
    <property type="entry name" value="DISEASE RESISTANCE PROTEIN RGA3"/>
    <property type="match status" value="1"/>
</dbReference>
<dbReference type="PANTHER" id="PTHR36766">
    <property type="entry name" value="PLANT BROAD-SPECTRUM MILDEW RESISTANCE PROTEIN RPW8"/>
    <property type="match status" value="1"/>
</dbReference>
<dbReference type="Pfam" id="PF23598">
    <property type="entry name" value="LRR_14"/>
    <property type="match status" value="1"/>
</dbReference>
<dbReference type="Pfam" id="PF00931">
    <property type="entry name" value="NB-ARC"/>
    <property type="match status" value="1"/>
</dbReference>
<dbReference type="Pfam" id="PF18052">
    <property type="entry name" value="Rx_N"/>
    <property type="match status" value="1"/>
</dbReference>
<dbReference type="Pfam" id="PF23559">
    <property type="entry name" value="WH_DRP"/>
    <property type="match status" value="1"/>
</dbReference>
<dbReference type="PRINTS" id="PR00364">
    <property type="entry name" value="DISEASERSIST"/>
</dbReference>
<dbReference type="SUPFAM" id="SSF52058">
    <property type="entry name" value="L domain-like"/>
    <property type="match status" value="1"/>
</dbReference>
<dbReference type="SUPFAM" id="SSF52540">
    <property type="entry name" value="P-loop containing nucleoside triphosphate hydrolases"/>
    <property type="match status" value="1"/>
</dbReference>
<evidence type="ECO:0000250" key="1"/>
<evidence type="ECO:0000255" key="2"/>
<evidence type="ECO:0000303" key="3">
    <source>
    </source>
</evidence>
<evidence type="ECO:0000305" key="4"/>
<feature type="chain" id="PRO_0000212744" description="Probable disease resistance protein At1g59620">
    <location>
        <begin position="1"/>
        <end position="870"/>
    </location>
</feature>
<feature type="domain" description="NB-ARC">
    <location>
        <begin position="123"/>
        <end position="432"/>
    </location>
</feature>
<feature type="repeat" description="LRR 1">
    <location>
        <begin position="543"/>
        <end position="567"/>
    </location>
</feature>
<feature type="repeat" description="LRR 2">
    <location>
        <begin position="568"/>
        <end position="590"/>
    </location>
</feature>
<feature type="repeat" description="LRR 3">
    <location>
        <begin position="703"/>
        <end position="726"/>
    </location>
</feature>
<feature type="repeat" description="LRR 4">
    <location>
        <begin position="735"/>
        <end position="758"/>
    </location>
</feature>
<feature type="repeat" description="LRR 5">
    <location>
        <begin position="759"/>
        <end position="786"/>
    </location>
</feature>
<feature type="repeat" description="LRR 6">
    <location>
        <begin position="808"/>
        <end position="833"/>
    </location>
</feature>
<feature type="binding site" evidence="2">
    <location>
        <begin position="167"/>
        <end position="174"/>
    </location>
    <ligand>
        <name>ATP</name>
        <dbReference type="ChEBI" id="CHEBI:30616"/>
    </ligand>
</feature>
<feature type="splice variant" id="VSP_042239" description="In isoform 2." evidence="3">
    <location>
        <begin position="462"/>
        <end position="496"/>
    </location>
</feature>
<feature type="splice variant" id="VSP_042240" description="In isoform 2." evidence="3">
    <original>MPRLPD</original>
    <variation>SFLMSF</variation>
    <location>
        <begin position="725"/>
        <end position="730"/>
    </location>
</feature>
<feature type="splice variant" id="VSP_042241" description="In isoform 2." evidence="3">
    <location>
        <begin position="731"/>
        <end position="870"/>
    </location>
</feature>
<proteinExistence type="evidence at transcript level"/>
<keyword id="KW-0025">Alternative splicing</keyword>
<keyword id="KW-0067">ATP-binding</keyword>
<keyword id="KW-0433">Leucine-rich repeat</keyword>
<keyword id="KW-0547">Nucleotide-binding</keyword>
<keyword id="KW-0611">Plant defense</keyword>
<keyword id="KW-1185">Reference proteome</keyword>
<keyword id="KW-0677">Repeat</keyword>
<accession>Q9LQ54</accession>
<accession>F4ID11</accession>
<accession>Q9SLT7</accession>
<reference key="1">
    <citation type="journal article" date="1999" name="Gene">
        <title>Isolation and analysis of cDNA within a 300 kb Arabidopsis thaliana genomic region located around the 100 map unit of chromosome 1.</title>
        <authorList>
            <person name="Kato A."/>
            <person name="Suzuki M."/>
            <person name="Kuwahara A."/>
            <person name="Ooe H."/>
            <person name="Higano-Inaba K."/>
            <person name="Komeda Y."/>
        </authorList>
    </citation>
    <scope>NUCLEOTIDE SEQUENCE [MRNA] (ISOFORM 2)</scope>
    <source>
        <strain>cv. Columbia</strain>
    </source>
</reference>
<reference key="2">
    <citation type="journal article" date="2000" name="Nature">
        <title>Sequence and analysis of chromosome 1 of the plant Arabidopsis thaliana.</title>
        <authorList>
            <person name="Theologis A."/>
            <person name="Ecker J.R."/>
            <person name="Palm C.J."/>
            <person name="Federspiel N.A."/>
            <person name="Kaul S."/>
            <person name="White O."/>
            <person name="Alonso J."/>
            <person name="Altafi H."/>
            <person name="Araujo R."/>
            <person name="Bowman C.L."/>
            <person name="Brooks S.Y."/>
            <person name="Buehler E."/>
            <person name="Chan A."/>
            <person name="Chao Q."/>
            <person name="Chen H."/>
            <person name="Cheuk R.F."/>
            <person name="Chin C.W."/>
            <person name="Chung M.K."/>
            <person name="Conn L."/>
            <person name="Conway A.B."/>
            <person name="Conway A.R."/>
            <person name="Creasy T.H."/>
            <person name="Dewar K."/>
            <person name="Dunn P."/>
            <person name="Etgu P."/>
            <person name="Feldblyum T.V."/>
            <person name="Feng J.-D."/>
            <person name="Fong B."/>
            <person name="Fujii C.Y."/>
            <person name="Gill J.E."/>
            <person name="Goldsmith A.D."/>
            <person name="Haas B."/>
            <person name="Hansen N.F."/>
            <person name="Hughes B."/>
            <person name="Huizar L."/>
            <person name="Hunter J.L."/>
            <person name="Jenkins J."/>
            <person name="Johnson-Hopson C."/>
            <person name="Khan S."/>
            <person name="Khaykin E."/>
            <person name="Kim C.J."/>
            <person name="Koo H.L."/>
            <person name="Kremenetskaia I."/>
            <person name="Kurtz D.B."/>
            <person name="Kwan A."/>
            <person name="Lam B."/>
            <person name="Langin-Hooper S."/>
            <person name="Lee A."/>
            <person name="Lee J.M."/>
            <person name="Lenz C.A."/>
            <person name="Li J.H."/>
            <person name="Li Y.-P."/>
            <person name="Lin X."/>
            <person name="Liu S.X."/>
            <person name="Liu Z.A."/>
            <person name="Luros J.S."/>
            <person name="Maiti R."/>
            <person name="Marziali A."/>
            <person name="Militscher J."/>
            <person name="Miranda M."/>
            <person name="Nguyen M."/>
            <person name="Nierman W.C."/>
            <person name="Osborne B.I."/>
            <person name="Pai G."/>
            <person name="Peterson J."/>
            <person name="Pham P.K."/>
            <person name="Rizzo M."/>
            <person name="Rooney T."/>
            <person name="Rowley D."/>
            <person name="Sakano H."/>
            <person name="Salzberg S.L."/>
            <person name="Schwartz J.R."/>
            <person name="Shinn P."/>
            <person name="Southwick A.M."/>
            <person name="Sun H."/>
            <person name="Tallon L.J."/>
            <person name="Tambunga G."/>
            <person name="Toriumi M.J."/>
            <person name="Town C.D."/>
            <person name="Utterback T."/>
            <person name="Van Aken S."/>
            <person name="Vaysberg M."/>
            <person name="Vysotskaia V.S."/>
            <person name="Walker M."/>
            <person name="Wu D."/>
            <person name="Yu G."/>
            <person name="Fraser C.M."/>
            <person name="Venter J.C."/>
            <person name="Davis R.W."/>
        </authorList>
    </citation>
    <scope>NUCLEOTIDE SEQUENCE [LARGE SCALE GENOMIC DNA]</scope>
    <source>
        <strain>cv. Columbia</strain>
    </source>
</reference>
<reference key="3">
    <citation type="journal article" date="2017" name="Plant J.">
        <title>Araport11: a complete reannotation of the Arabidopsis thaliana reference genome.</title>
        <authorList>
            <person name="Cheng C.Y."/>
            <person name="Krishnakumar V."/>
            <person name="Chan A.P."/>
            <person name="Thibaud-Nissen F."/>
            <person name="Schobel S."/>
            <person name="Town C.D."/>
        </authorList>
    </citation>
    <scope>GENOME REANNOTATION</scope>
    <source>
        <strain>cv. Columbia</strain>
    </source>
</reference>
<sequence>MAETLLSFGVEKLWDLLVRESDRFQGVKKQFNELRSDLNKLRCFLEDADAKKHQSAMVSNTVKEVKEIVYDTEDIIETFLRKKQLGRTRGMKKRIKEFACVLPDRRKIAIDMEGLSKRIAKKDKRNMRQTFSNNNESVLVGLEENVKKLVGHLVEVEDSSQVVSITGMGGIGKTTLARQVFNHETVKSHFAQLAWVCVSQQFTRKYVWQTILRKVGPEYIKLEMTEDELQEKLFRLLGTRKALIVLDDIWREEDWDMIEPIFPLGKGWKVLLTSRNEGVALRANPNGFIFKPDCLTPEESWTIFRRIVFPGENTTEYKVDEKMEELGKQMIKHCGGLPLALKVLGGLLVVHFTLDEWKRIYGNIKSHIVGGTSFNDKNMSSVYHILHLSFEELPIYLKHCFLYLAQFPEDFTIDLEKLSYYWAAEGMPRPRYYDGATIRKVGDGYIEELVKRNMVISERDARTRRFETCHLHDIVREVCLKAEEENLIETENSKSPSKPRRLVVKGGDKTDMEGKLKNPKLRSLLFIEELGGYRGFEVWFTRLQLMRVLDLHGVEFGGELPSSIGLLIHLRYLSLYRAKASHLPSSMQNLKMLLYLNLCVQESCYIYIPNFLKEMLELKYLSLPLRMDDKVKLELGNLVNLEKLENFSTEHGGVGDLQFMTRLRALSIYIRGRLNMKTLSSSLSKLRDLENLTICYYPMYAPMSGIEGLVLDCDQLKHLNLRIYMPRLPDEQHFPWHLRNISLAECCLKEDPMPILEKLLQLNEVSLSHQSFCGKRMVCSDGGFPQLQKLDLCGLEEWEEWIVEEGSMPRLHKLTIRNDPKLKELPDGLKFITSLKEVHVILNNWDFKKKLSRGGEDYYKVQHIPLVRFL</sequence>
<protein>
    <recommendedName>
        <fullName>Probable disease resistance protein At1g59620</fullName>
    </recommendedName>
    <alternativeName>
        <fullName>CW9</fullName>
    </alternativeName>
</protein>
<name>DRL12_ARATH</name>
<organism>
    <name type="scientific">Arabidopsis thaliana</name>
    <name type="common">Mouse-ear cress</name>
    <dbReference type="NCBI Taxonomy" id="3702"/>
    <lineage>
        <taxon>Eukaryota</taxon>
        <taxon>Viridiplantae</taxon>
        <taxon>Streptophyta</taxon>
        <taxon>Embryophyta</taxon>
        <taxon>Tracheophyta</taxon>
        <taxon>Spermatophyta</taxon>
        <taxon>Magnoliopsida</taxon>
        <taxon>eudicotyledons</taxon>
        <taxon>Gunneridae</taxon>
        <taxon>Pentapetalae</taxon>
        <taxon>rosids</taxon>
        <taxon>malvids</taxon>
        <taxon>Brassicales</taxon>
        <taxon>Brassicaceae</taxon>
        <taxon>Camelineae</taxon>
        <taxon>Arabidopsis</taxon>
    </lineage>
</organism>
<gene>
    <name type="ordered locus">At1g59620</name>
    <name type="ORF">T30E16.18</name>
</gene>